<proteinExistence type="evidence at transcript level"/>
<comment type="function">
    <text evidence="6">Transporter that mediates the cellular uptake of ecdysteroids, including ecdysone, from the hemolymph.</text>
</comment>
<comment type="subcellular location">
    <subcellularLocation>
        <location evidence="4 6">Cell membrane</location>
        <topology evidence="4 6">Multi-pass membrane protein</topology>
    </subcellularLocation>
</comment>
<comment type="developmental stage">
    <text evidence="6">Expressed ubiquitously during development in central nervous system, imaginal disk, fat body, gut, and to a lesser extent in Malpighian tubules.</text>
</comment>
<comment type="disruption phenotype">
    <text evidence="6">Development is arrested at the end of the first instar larval stage (PubMed:30293839). RNAi-mediated knockdown blocks ecdysone-dependent fat body cell migration into the pupal head (PubMed:30293839). In the fat body, results in defective ecdysone signaling (PubMed:30293839).</text>
</comment>
<comment type="similarity">
    <text evidence="4">Belongs to the organo anion transporter (TC 2.A.60) family.</text>
</comment>
<protein>
    <recommendedName>
        <fullName evidence="8">Solute carrier organic anion transporter family member 74D</fullName>
    </recommendedName>
    <alternativeName>
        <fullName evidence="7">Ecdysone Importer</fullName>
        <shortName evidence="7">EcI</shortName>
    </alternativeName>
    <alternativeName>
        <fullName evidence="10">Organic anion transporting polypeptide 74D</fullName>
    </alternativeName>
</protein>
<reference evidence="11" key="1">
    <citation type="journal article" date="2000" name="Science">
        <title>The genome sequence of Drosophila melanogaster.</title>
        <authorList>
            <person name="Adams M.D."/>
            <person name="Celniker S.E."/>
            <person name="Holt R.A."/>
            <person name="Evans C.A."/>
            <person name="Gocayne J.D."/>
            <person name="Amanatides P.G."/>
            <person name="Scherer S.E."/>
            <person name="Li P.W."/>
            <person name="Hoskins R.A."/>
            <person name="Galle R.F."/>
            <person name="George R.A."/>
            <person name="Lewis S.E."/>
            <person name="Richards S."/>
            <person name="Ashburner M."/>
            <person name="Henderson S.N."/>
            <person name="Sutton G.G."/>
            <person name="Wortman J.R."/>
            <person name="Yandell M.D."/>
            <person name="Zhang Q."/>
            <person name="Chen L.X."/>
            <person name="Brandon R.C."/>
            <person name="Rogers Y.-H.C."/>
            <person name="Blazej R.G."/>
            <person name="Champe M."/>
            <person name="Pfeiffer B.D."/>
            <person name="Wan K.H."/>
            <person name="Doyle C."/>
            <person name="Baxter E.G."/>
            <person name="Helt G."/>
            <person name="Nelson C.R."/>
            <person name="Miklos G.L.G."/>
            <person name="Abril J.F."/>
            <person name="Agbayani A."/>
            <person name="An H.-J."/>
            <person name="Andrews-Pfannkoch C."/>
            <person name="Baldwin D."/>
            <person name="Ballew R.M."/>
            <person name="Basu A."/>
            <person name="Baxendale J."/>
            <person name="Bayraktaroglu L."/>
            <person name="Beasley E.M."/>
            <person name="Beeson K.Y."/>
            <person name="Benos P.V."/>
            <person name="Berman B.P."/>
            <person name="Bhandari D."/>
            <person name="Bolshakov S."/>
            <person name="Borkova D."/>
            <person name="Botchan M.R."/>
            <person name="Bouck J."/>
            <person name="Brokstein P."/>
            <person name="Brottier P."/>
            <person name="Burtis K.C."/>
            <person name="Busam D.A."/>
            <person name="Butler H."/>
            <person name="Cadieu E."/>
            <person name="Center A."/>
            <person name="Chandra I."/>
            <person name="Cherry J.M."/>
            <person name="Cawley S."/>
            <person name="Dahlke C."/>
            <person name="Davenport L.B."/>
            <person name="Davies P."/>
            <person name="de Pablos B."/>
            <person name="Delcher A."/>
            <person name="Deng Z."/>
            <person name="Mays A.D."/>
            <person name="Dew I."/>
            <person name="Dietz S.M."/>
            <person name="Dodson K."/>
            <person name="Doup L.E."/>
            <person name="Downes M."/>
            <person name="Dugan-Rocha S."/>
            <person name="Dunkov B.C."/>
            <person name="Dunn P."/>
            <person name="Durbin K.J."/>
            <person name="Evangelista C.C."/>
            <person name="Ferraz C."/>
            <person name="Ferriera S."/>
            <person name="Fleischmann W."/>
            <person name="Fosler C."/>
            <person name="Gabrielian A.E."/>
            <person name="Garg N.S."/>
            <person name="Gelbart W.M."/>
            <person name="Glasser K."/>
            <person name="Glodek A."/>
            <person name="Gong F."/>
            <person name="Gorrell J.H."/>
            <person name="Gu Z."/>
            <person name="Guan P."/>
            <person name="Harris M."/>
            <person name="Harris N.L."/>
            <person name="Harvey D.A."/>
            <person name="Heiman T.J."/>
            <person name="Hernandez J.R."/>
            <person name="Houck J."/>
            <person name="Hostin D."/>
            <person name="Houston K.A."/>
            <person name="Howland T.J."/>
            <person name="Wei M.-H."/>
            <person name="Ibegwam C."/>
            <person name="Jalali M."/>
            <person name="Kalush F."/>
            <person name="Karpen G.H."/>
            <person name="Ke Z."/>
            <person name="Kennison J.A."/>
            <person name="Ketchum K.A."/>
            <person name="Kimmel B.E."/>
            <person name="Kodira C.D."/>
            <person name="Kraft C.L."/>
            <person name="Kravitz S."/>
            <person name="Kulp D."/>
            <person name="Lai Z."/>
            <person name="Lasko P."/>
            <person name="Lei Y."/>
            <person name="Levitsky A.A."/>
            <person name="Li J.H."/>
            <person name="Li Z."/>
            <person name="Liang Y."/>
            <person name="Lin X."/>
            <person name="Liu X."/>
            <person name="Mattei B."/>
            <person name="McIntosh T.C."/>
            <person name="McLeod M.P."/>
            <person name="McPherson D."/>
            <person name="Merkulov G."/>
            <person name="Milshina N.V."/>
            <person name="Mobarry C."/>
            <person name="Morris J."/>
            <person name="Moshrefi A."/>
            <person name="Mount S.M."/>
            <person name="Moy M."/>
            <person name="Murphy B."/>
            <person name="Murphy L."/>
            <person name="Muzny D.M."/>
            <person name="Nelson D.L."/>
            <person name="Nelson D.R."/>
            <person name="Nelson K.A."/>
            <person name="Nixon K."/>
            <person name="Nusskern D.R."/>
            <person name="Pacleb J.M."/>
            <person name="Palazzolo M."/>
            <person name="Pittman G.S."/>
            <person name="Pan S."/>
            <person name="Pollard J."/>
            <person name="Puri V."/>
            <person name="Reese M.G."/>
            <person name="Reinert K."/>
            <person name="Remington K."/>
            <person name="Saunders R.D.C."/>
            <person name="Scheeler F."/>
            <person name="Shen H."/>
            <person name="Shue B.C."/>
            <person name="Siden-Kiamos I."/>
            <person name="Simpson M."/>
            <person name="Skupski M.P."/>
            <person name="Smith T.J."/>
            <person name="Spier E."/>
            <person name="Spradling A.C."/>
            <person name="Stapleton M."/>
            <person name="Strong R."/>
            <person name="Sun E."/>
            <person name="Svirskas R."/>
            <person name="Tector C."/>
            <person name="Turner R."/>
            <person name="Venter E."/>
            <person name="Wang A.H."/>
            <person name="Wang X."/>
            <person name="Wang Z.-Y."/>
            <person name="Wassarman D.A."/>
            <person name="Weinstock G.M."/>
            <person name="Weissenbach J."/>
            <person name="Williams S.M."/>
            <person name="Woodage T."/>
            <person name="Worley K.C."/>
            <person name="Wu D."/>
            <person name="Yang S."/>
            <person name="Yao Q.A."/>
            <person name="Ye J."/>
            <person name="Yeh R.-F."/>
            <person name="Zaveri J.S."/>
            <person name="Zhan M."/>
            <person name="Zhang G."/>
            <person name="Zhao Q."/>
            <person name="Zheng L."/>
            <person name="Zheng X.H."/>
            <person name="Zhong F.N."/>
            <person name="Zhong W."/>
            <person name="Zhou X."/>
            <person name="Zhu S.C."/>
            <person name="Zhu X."/>
            <person name="Smith H.O."/>
            <person name="Gibbs R.A."/>
            <person name="Myers E.W."/>
            <person name="Rubin G.M."/>
            <person name="Venter J.C."/>
        </authorList>
    </citation>
    <scope>NUCLEOTIDE SEQUENCE [LARGE SCALE GENOMIC DNA]</scope>
    <source>
        <strain evidence="11">Berkeley</strain>
    </source>
</reference>
<reference evidence="11" key="2">
    <citation type="journal article" date="2002" name="Genome Biol.">
        <title>Annotation of the Drosophila melanogaster euchromatic genome: a systematic review.</title>
        <authorList>
            <person name="Misra S."/>
            <person name="Crosby M.A."/>
            <person name="Mungall C.J."/>
            <person name="Matthews B.B."/>
            <person name="Campbell K.S."/>
            <person name="Hradecky P."/>
            <person name="Huang Y."/>
            <person name="Kaminker J.S."/>
            <person name="Millburn G.H."/>
            <person name="Prochnik S.E."/>
            <person name="Smith C.D."/>
            <person name="Tupy J.L."/>
            <person name="Whitfield E.J."/>
            <person name="Bayraktaroglu L."/>
            <person name="Berman B.P."/>
            <person name="Bettencourt B.R."/>
            <person name="Celniker S.E."/>
            <person name="de Grey A.D.N.J."/>
            <person name="Drysdale R.A."/>
            <person name="Harris N.L."/>
            <person name="Richter J."/>
            <person name="Russo S."/>
            <person name="Schroeder A.J."/>
            <person name="Shu S.Q."/>
            <person name="Stapleton M."/>
            <person name="Yamada C."/>
            <person name="Ashburner M."/>
            <person name="Gelbart W.M."/>
            <person name="Rubin G.M."/>
            <person name="Lewis S.E."/>
        </authorList>
    </citation>
    <scope>GENOME REANNOTATION</scope>
    <source>
        <strain evidence="11">Berkeley</strain>
    </source>
</reference>
<reference evidence="9" key="3">
    <citation type="journal article" date="2002" name="Genome Biol.">
        <title>A Drosophila full-length cDNA resource.</title>
        <authorList>
            <person name="Stapleton M."/>
            <person name="Carlson J.W."/>
            <person name="Brokstein P."/>
            <person name="Yu C."/>
            <person name="Champe M."/>
            <person name="George R.A."/>
            <person name="Guarin H."/>
            <person name="Kronmiller B."/>
            <person name="Pacleb J.M."/>
            <person name="Park S."/>
            <person name="Wan K.H."/>
            <person name="Rubin G.M."/>
            <person name="Celniker S.E."/>
        </authorList>
    </citation>
    <scope>NUCLEOTIDE SEQUENCE [LARGE SCALE MRNA]</scope>
    <source>
        <strain evidence="9">Berkeley</strain>
        <tissue evidence="9">Head</tissue>
    </source>
</reference>
<reference evidence="8" key="4">
    <citation type="journal article" date="2018" name="Dev. Cell">
        <title>A Membrane Transporter Is Required for Steroid Hormone Uptake in Drosophila.</title>
        <authorList>
            <person name="Okamoto N."/>
            <person name="Viswanatha R."/>
            <person name="Bittar R."/>
            <person name="Li Z."/>
            <person name="Haga-Yamanaka S."/>
            <person name="Perrimon N."/>
            <person name="Yamanaka N."/>
        </authorList>
    </citation>
    <scope>FUNCTION</scope>
    <scope>SUBCELLULAR LOCATION</scope>
    <scope>DEVELOPMENTAL STAGE</scope>
    <scope>DISRUPTION PHENOTYPE</scope>
</reference>
<organism evidence="11">
    <name type="scientific">Drosophila melanogaster</name>
    <name type="common">Fruit fly</name>
    <dbReference type="NCBI Taxonomy" id="7227"/>
    <lineage>
        <taxon>Eukaryota</taxon>
        <taxon>Metazoa</taxon>
        <taxon>Ecdysozoa</taxon>
        <taxon>Arthropoda</taxon>
        <taxon>Hexapoda</taxon>
        <taxon>Insecta</taxon>
        <taxon>Pterygota</taxon>
        <taxon>Neoptera</taxon>
        <taxon>Endopterygota</taxon>
        <taxon>Diptera</taxon>
        <taxon>Brachycera</taxon>
        <taxon>Muscomorpha</taxon>
        <taxon>Ephydroidea</taxon>
        <taxon>Drosophilidae</taxon>
        <taxon>Drosophila</taxon>
        <taxon>Sophophora</taxon>
    </lineage>
</organism>
<keyword id="KW-1003">Cell membrane</keyword>
<keyword id="KW-1015">Disulfide bond</keyword>
<keyword id="KW-0325">Glycoprotein</keyword>
<keyword id="KW-0406">Ion transport</keyword>
<keyword id="KW-0472">Membrane</keyword>
<keyword id="KW-1185">Reference proteome</keyword>
<keyword id="KW-0812">Transmembrane</keyword>
<keyword id="KW-1133">Transmembrane helix</keyword>
<keyword id="KW-0813">Transport</keyword>
<evidence type="ECO:0000255" key="1"/>
<evidence type="ECO:0000255" key="2">
    <source>
        <dbReference type="PROSITE-ProRule" id="PRU00498"/>
    </source>
</evidence>
<evidence type="ECO:0000255" key="3">
    <source>
        <dbReference type="PROSITE-ProRule" id="PRU00798"/>
    </source>
</evidence>
<evidence type="ECO:0000255" key="4">
    <source>
        <dbReference type="RuleBase" id="RU362056"/>
    </source>
</evidence>
<evidence type="ECO:0000256" key="5">
    <source>
        <dbReference type="SAM" id="MobiDB-lite"/>
    </source>
</evidence>
<evidence type="ECO:0000269" key="6">
    <source>
    </source>
</evidence>
<evidence type="ECO:0000303" key="7">
    <source>
    </source>
</evidence>
<evidence type="ECO:0000305" key="8"/>
<evidence type="ECO:0000312" key="9">
    <source>
        <dbReference type="EMBL" id="AAN71191.1"/>
    </source>
</evidence>
<evidence type="ECO:0000312" key="10">
    <source>
        <dbReference type="FlyBase" id="FBgn0036732"/>
    </source>
</evidence>
<evidence type="ECO:0000312" key="11">
    <source>
        <dbReference type="Proteomes" id="UP000000803"/>
    </source>
</evidence>
<gene>
    <name evidence="10" type="primary">Oatp74D</name>
    <name evidence="10" type="ORF">CG7571</name>
</gene>
<sequence>MTKSNGDVEAAAQVQSLGGKPSNGHGQLNGNGYHQNGGRRDSSQAFTPLLSQHNNGTTNGEVTTPPPSTVLYESTPSNNNEWKAPEDLGHLKNGLGNILSSNNNGTGNGHSLSEKYAHEQAPLTGGYKLPPRSSESEESDFDSDLNGGSSAESSSSCGLFGCRPRWARRFASTHVFMVVFLLAYILQGMYMTYFVSVITTIEKLFQIKSKTTGILLSASEMGQICTAMLLTYFAGRGHRPRWIACGMVLFSIAAFSCALPHFIFGEQLMHSSVILQQTQVSPPNNSFSSHWLNASSEQVNPNLCILGGNQTHSGSECNEERQLEQASHSKITVIVLCIFFGSLLSSGIGQTAVATLGIPYIDDNVGSKQSPMYMAVTIGMRILGPASGFIFGSFCTRWYVNFSNPGFDATDPRWIGAWWLGPVAIGSLMLLASIAMFSFPKQLRGKQKPPGQTATPAAPVEPEEKPKLKDFPKTVRRQLSNDILMFRTASCVFHLLPIAGLYTFLPKYLETQFRLATYDANMIAAFCGILVMGIGIVISGLFILKRKPTARGVAAWIAFTALVYSAGMIILMFIGCSMNDFAGYKPSDGNSPALIEPTCSAALNCTCDKENFAPICADGKMYISACHAGCSSSSLRPSDNRTLYSDCACIPDAPEAVNGYCDNNCKNFIYFILIFAICVFMHSTSEVGSMLLVMRCTHPKDKAMAMGVIQSAIGLFGNVPCPIIYGAVVDSACLIWKSVCGKHGACSLYDADTFRQYFLGITAGIMFLAFLMDLVVWRKAHRIDIAPEDPQEGGPASNGRTLEVSESKQPITPAPDTTV</sequence>
<accession>Q9VVH9</accession>
<feature type="chain" id="PRO_0000446514" description="Solute carrier organic anion transporter family member 74D">
    <location>
        <begin position="1"/>
        <end position="819"/>
    </location>
</feature>
<feature type="topological domain" description="Cytoplasmic" evidence="8">
    <location>
        <begin position="1"/>
        <end position="174"/>
    </location>
</feature>
<feature type="transmembrane region" description="Helical; Name=1" evidence="1">
    <location>
        <begin position="175"/>
        <end position="195"/>
    </location>
</feature>
<feature type="topological domain" description="Extracellular" evidence="8">
    <location>
        <begin position="196"/>
        <end position="213"/>
    </location>
</feature>
<feature type="transmembrane region" description="Helical; Name=2" evidence="1">
    <location>
        <begin position="214"/>
        <end position="234"/>
    </location>
</feature>
<feature type="topological domain" description="Cytoplasmic" evidence="8">
    <location>
        <begin position="235"/>
        <end position="242"/>
    </location>
</feature>
<feature type="transmembrane region" description="Helical; Name=3" evidence="1">
    <location>
        <begin position="243"/>
        <end position="263"/>
    </location>
</feature>
<feature type="topological domain" description="Extracellular" evidence="8">
    <location>
        <begin position="264"/>
        <end position="332"/>
    </location>
</feature>
<feature type="transmembrane region" description="Helical; Name=4" evidence="1">
    <location>
        <begin position="333"/>
        <end position="353"/>
    </location>
</feature>
<feature type="topological domain" description="Cytoplasmic" evidence="8">
    <location>
        <begin position="354"/>
        <end position="373"/>
    </location>
</feature>
<feature type="transmembrane region" description="Helical; Name=5" evidence="1">
    <location>
        <begin position="374"/>
        <end position="394"/>
    </location>
</feature>
<feature type="topological domain" description="Extracellular" evidence="8">
    <location>
        <begin position="395"/>
        <end position="413"/>
    </location>
</feature>
<feature type="transmembrane region" description="Helical; Name=6" evidence="1">
    <location>
        <begin position="414"/>
        <end position="434"/>
    </location>
</feature>
<feature type="topological domain" description="Cytoplasmic" evidence="8">
    <location>
        <begin position="435"/>
        <end position="488"/>
    </location>
</feature>
<feature type="transmembrane region" description="Helical; Name=7" evidence="1">
    <location>
        <begin position="489"/>
        <end position="509"/>
    </location>
</feature>
<feature type="topological domain" description="Extracellular" evidence="8">
    <location>
        <begin position="510"/>
        <end position="522"/>
    </location>
</feature>
<feature type="transmembrane region" description="Helical; Name=8" evidence="1">
    <location>
        <begin position="523"/>
        <end position="543"/>
    </location>
</feature>
<feature type="topological domain" description="Cytoplasmic" evidence="8">
    <location>
        <begin position="544"/>
        <end position="553"/>
    </location>
</feature>
<feature type="transmembrane region" description="Helical; Name=9" evidence="1">
    <location>
        <begin position="554"/>
        <end position="574"/>
    </location>
</feature>
<feature type="topological domain" description="Extracellular" evidence="8">
    <location>
        <begin position="575"/>
        <end position="667"/>
    </location>
</feature>
<feature type="transmembrane region" description="Helical; Name=10" evidence="1">
    <location>
        <begin position="668"/>
        <end position="688"/>
    </location>
</feature>
<feature type="topological domain" description="Cytoplasmic" evidence="8">
    <location>
        <begin position="689"/>
        <end position="707"/>
    </location>
</feature>
<feature type="transmembrane region" description="Helical; Name=11" evidence="1">
    <location>
        <begin position="708"/>
        <end position="728"/>
    </location>
</feature>
<feature type="topological domain" description="Extracellular" evidence="8">
    <location>
        <begin position="729"/>
        <end position="756"/>
    </location>
</feature>
<feature type="transmembrane region" description="Helical; Name=12" evidence="1">
    <location>
        <begin position="757"/>
        <end position="777"/>
    </location>
</feature>
<feature type="topological domain" description="Cytoplasmic" evidence="8">
    <location>
        <begin position="778"/>
        <end position="819"/>
    </location>
</feature>
<feature type="domain" description="Kazal-like" evidence="3">
    <location>
        <begin position="593"/>
        <end position="651"/>
    </location>
</feature>
<feature type="region of interest" description="Disordered" evidence="5">
    <location>
        <begin position="1"/>
        <end position="157"/>
    </location>
</feature>
<feature type="region of interest" description="Disordered" evidence="5">
    <location>
        <begin position="444"/>
        <end position="466"/>
    </location>
</feature>
<feature type="region of interest" description="Disordered" evidence="5">
    <location>
        <begin position="787"/>
        <end position="819"/>
    </location>
</feature>
<feature type="compositionally biased region" description="Polar residues" evidence="5">
    <location>
        <begin position="24"/>
        <end position="34"/>
    </location>
</feature>
<feature type="compositionally biased region" description="Polar residues" evidence="5">
    <location>
        <begin position="43"/>
        <end position="62"/>
    </location>
</feature>
<feature type="compositionally biased region" description="Polar residues" evidence="5">
    <location>
        <begin position="71"/>
        <end position="81"/>
    </location>
</feature>
<feature type="compositionally biased region" description="Low complexity" evidence="5">
    <location>
        <begin position="91"/>
        <end position="111"/>
    </location>
</feature>
<feature type="compositionally biased region" description="Low complexity" evidence="5">
    <location>
        <begin position="144"/>
        <end position="157"/>
    </location>
</feature>
<feature type="compositionally biased region" description="Polar residues" evidence="5">
    <location>
        <begin position="807"/>
        <end position="819"/>
    </location>
</feature>
<feature type="glycosylation site" description="N-linked (GlcNAc...) asparagine" evidence="2">
    <location>
        <position position="284"/>
    </location>
</feature>
<feature type="glycosylation site" description="N-linked (GlcNAc...) asparagine" evidence="2">
    <location>
        <position position="293"/>
    </location>
</feature>
<feature type="glycosylation site" description="N-linked (GlcNAc...) asparagine" evidence="2">
    <location>
        <position position="309"/>
    </location>
</feature>
<feature type="glycosylation site" description="N-linked (GlcNAc...) asparagine" evidence="2">
    <location>
        <position position="401"/>
    </location>
</feature>
<feature type="glycosylation site" description="N-linked (GlcNAc...) asparagine" evidence="2">
    <location>
        <position position="604"/>
    </location>
</feature>
<feature type="glycosylation site" description="N-linked (GlcNAc...) asparagine" evidence="2">
    <location>
        <position position="640"/>
    </location>
</feature>
<feature type="disulfide bond" evidence="3">
    <location>
        <begin position="599"/>
        <end position="630"/>
    </location>
</feature>
<feature type="disulfide bond" evidence="3">
    <location>
        <begin position="607"/>
        <end position="626"/>
    </location>
</feature>
<feature type="disulfide bond" evidence="3">
    <location>
        <begin position="616"/>
        <end position="649"/>
    </location>
</feature>
<dbReference type="EMBL" id="AE014296">
    <property type="protein sequence ID" value="AAF49332.2"/>
    <property type="molecule type" value="Genomic_DNA"/>
</dbReference>
<dbReference type="EMBL" id="AE014296">
    <property type="protein sequence ID" value="ACZ94731.1"/>
    <property type="molecule type" value="Genomic_DNA"/>
</dbReference>
<dbReference type="EMBL" id="AE014296">
    <property type="protein sequence ID" value="AHN58120.1"/>
    <property type="molecule type" value="Genomic_DNA"/>
</dbReference>
<dbReference type="EMBL" id="AE014296">
    <property type="protein sequence ID" value="AHN58121.1"/>
    <property type="molecule type" value="Genomic_DNA"/>
</dbReference>
<dbReference type="EMBL" id="BT001436">
    <property type="protein sequence ID" value="AAN71191.1"/>
    <property type="molecule type" value="mRNA"/>
</dbReference>
<dbReference type="RefSeq" id="NP_001163460.1">
    <property type="nucleotide sequence ID" value="NM_001169989.2"/>
</dbReference>
<dbReference type="RefSeq" id="NP_001287095.1">
    <property type="nucleotide sequence ID" value="NM_001300166.1"/>
</dbReference>
<dbReference type="RefSeq" id="NP_001287096.1">
    <property type="nucleotide sequence ID" value="NM_001300167.1"/>
</dbReference>
<dbReference type="RefSeq" id="NP_648989.1">
    <property type="nucleotide sequence ID" value="NM_140732.3"/>
</dbReference>
<dbReference type="SMR" id="Q9VVH9"/>
<dbReference type="FunCoup" id="Q9VVH9">
    <property type="interactions" value="26"/>
</dbReference>
<dbReference type="IntAct" id="Q9VVH9">
    <property type="interactions" value="3"/>
</dbReference>
<dbReference type="STRING" id="7227.FBpp0311343"/>
<dbReference type="GlyCosmos" id="Q9VVH9">
    <property type="glycosylation" value="6 sites, No reported glycans"/>
</dbReference>
<dbReference type="GlyGen" id="Q9VVH9">
    <property type="glycosylation" value="9 sites"/>
</dbReference>
<dbReference type="PaxDb" id="7227-FBpp0074939"/>
<dbReference type="DNASU" id="39954"/>
<dbReference type="EnsemblMetazoa" id="FBtr0075173">
    <property type="protein sequence ID" value="FBpp0074939"/>
    <property type="gene ID" value="FBgn0036732"/>
</dbReference>
<dbReference type="EnsemblMetazoa" id="FBtr0302041">
    <property type="protein sequence ID" value="FBpp0291251"/>
    <property type="gene ID" value="FBgn0036732"/>
</dbReference>
<dbReference type="EnsemblMetazoa" id="FBtr0345117">
    <property type="protein sequence ID" value="FBpp0311342"/>
    <property type="gene ID" value="FBgn0036732"/>
</dbReference>
<dbReference type="EnsemblMetazoa" id="FBtr0345118">
    <property type="protein sequence ID" value="FBpp0311343"/>
    <property type="gene ID" value="FBgn0036732"/>
</dbReference>
<dbReference type="GeneID" id="39954"/>
<dbReference type="KEGG" id="dme:Dmel_CG7571"/>
<dbReference type="UCSC" id="CG7571-RA">
    <property type="organism name" value="d. melanogaster"/>
</dbReference>
<dbReference type="AGR" id="FB:FBgn0036732"/>
<dbReference type="CTD" id="39954"/>
<dbReference type="FlyBase" id="FBgn0036732">
    <property type="gene designation" value="Oatp74D"/>
</dbReference>
<dbReference type="VEuPathDB" id="VectorBase:FBgn0036732"/>
<dbReference type="eggNOG" id="KOG3626">
    <property type="taxonomic scope" value="Eukaryota"/>
</dbReference>
<dbReference type="GeneTree" id="ENSGT01130000278287"/>
<dbReference type="HOGENOM" id="CLU_008954_1_3_1"/>
<dbReference type="InParanoid" id="Q9VVH9"/>
<dbReference type="OMA" id="NFAPICG"/>
<dbReference type="OrthoDB" id="5062115at2759"/>
<dbReference type="PhylomeDB" id="Q9VVH9"/>
<dbReference type="Reactome" id="R-DME-6798695">
    <property type="pathway name" value="Neutrophil degranulation"/>
</dbReference>
<dbReference type="Reactome" id="R-DME-879518">
    <property type="pathway name" value="Transport of organic anions"/>
</dbReference>
<dbReference type="BioGRID-ORCS" id="39954">
    <property type="hits" value="0 hits in 3 CRISPR screens"/>
</dbReference>
<dbReference type="GenomeRNAi" id="39954"/>
<dbReference type="PRO" id="PR:Q9VVH9"/>
<dbReference type="Proteomes" id="UP000000803">
    <property type="component" value="Chromosome 3L"/>
</dbReference>
<dbReference type="Bgee" id="FBgn0036732">
    <property type="expression patterns" value="Expressed in adult glial cell (Drosophila) in antenna and 176 other cell types or tissues"/>
</dbReference>
<dbReference type="ExpressionAtlas" id="Q9VVH9">
    <property type="expression patterns" value="baseline and differential"/>
</dbReference>
<dbReference type="GO" id="GO:0016323">
    <property type="term" value="C:basolateral plasma membrane"/>
    <property type="evidence" value="ECO:0000318"/>
    <property type="project" value="GO_Central"/>
</dbReference>
<dbReference type="GO" id="GO:0043231">
    <property type="term" value="C:intracellular membrane-bounded organelle"/>
    <property type="evidence" value="ECO:0000314"/>
    <property type="project" value="FlyBase"/>
</dbReference>
<dbReference type="GO" id="GO:0005886">
    <property type="term" value="C:plasma membrane"/>
    <property type="evidence" value="ECO:0000314"/>
    <property type="project" value="UniProtKB"/>
</dbReference>
<dbReference type="GO" id="GO:0008514">
    <property type="term" value="F:organic anion transmembrane transporter activity"/>
    <property type="evidence" value="ECO:0000250"/>
    <property type="project" value="FlyBase"/>
</dbReference>
<dbReference type="GO" id="GO:0015347">
    <property type="term" value="F:sodium-independent organic anion transmembrane transporter activity"/>
    <property type="evidence" value="ECO:0000318"/>
    <property type="project" value="GO_Central"/>
</dbReference>
<dbReference type="GO" id="GO:0035076">
    <property type="term" value="P:ecdysone receptor signaling pathway"/>
    <property type="evidence" value="ECO:0000315"/>
    <property type="project" value="UniProtKB"/>
</dbReference>
<dbReference type="GO" id="GO:0002164">
    <property type="term" value="P:larval development"/>
    <property type="evidence" value="ECO:0000315"/>
    <property type="project" value="UniProtKB"/>
</dbReference>
<dbReference type="GO" id="GO:0006811">
    <property type="term" value="P:monoatomic ion transport"/>
    <property type="evidence" value="ECO:0007669"/>
    <property type="project" value="UniProtKB-KW"/>
</dbReference>
<dbReference type="GO" id="GO:0015711">
    <property type="term" value="P:organic anion transport"/>
    <property type="evidence" value="ECO:0000250"/>
    <property type="project" value="FlyBase"/>
</dbReference>
<dbReference type="GO" id="GO:0043252">
    <property type="term" value="P:sodium-independent organic anion transport"/>
    <property type="evidence" value="ECO:0000318"/>
    <property type="project" value="GO_Central"/>
</dbReference>
<dbReference type="GO" id="GO:0055085">
    <property type="term" value="P:transmembrane transport"/>
    <property type="evidence" value="ECO:0000250"/>
    <property type="project" value="FlyBase"/>
</dbReference>
<dbReference type="CDD" id="cd17336">
    <property type="entry name" value="MFS_SLCO_OATP"/>
    <property type="match status" value="1"/>
</dbReference>
<dbReference type="Gene3D" id="1.20.1250.20">
    <property type="entry name" value="MFS general substrate transporter like domains"/>
    <property type="match status" value="1"/>
</dbReference>
<dbReference type="InterPro" id="IPR002350">
    <property type="entry name" value="Kazal_dom"/>
</dbReference>
<dbReference type="InterPro" id="IPR036259">
    <property type="entry name" value="MFS_trans_sf"/>
</dbReference>
<dbReference type="InterPro" id="IPR004156">
    <property type="entry name" value="OATP"/>
</dbReference>
<dbReference type="NCBIfam" id="TIGR00805">
    <property type="entry name" value="oat"/>
    <property type="match status" value="1"/>
</dbReference>
<dbReference type="PANTHER" id="PTHR11388">
    <property type="entry name" value="ORGANIC ANION TRANSPORTER"/>
    <property type="match status" value="1"/>
</dbReference>
<dbReference type="PANTHER" id="PTHR11388:SF159">
    <property type="entry name" value="SOLUTE CARRIER ORGANIC ANION TRANSPORTER FAMILY MEMBER 74D"/>
    <property type="match status" value="1"/>
</dbReference>
<dbReference type="Pfam" id="PF07648">
    <property type="entry name" value="Kazal_2"/>
    <property type="match status" value="1"/>
</dbReference>
<dbReference type="Pfam" id="PF03137">
    <property type="entry name" value="OATP"/>
    <property type="match status" value="1"/>
</dbReference>
<dbReference type="SUPFAM" id="SSF103473">
    <property type="entry name" value="MFS general substrate transporter"/>
    <property type="match status" value="1"/>
</dbReference>
<dbReference type="PROSITE" id="PS51465">
    <property type="entry name" value="KAZAL_2"/>
    <property type="match status" value="1"/>
</dbReference>
<name>SO74D_DROME</name>